<name>MRS2A_ORYSI</name>
<dbReference type="EMBL" id="CM000128">
    <property type="protein sequence ID" value="EEC75953.1"/>
    <property type="molecule type" value="Genomic_DNA"/>
</dbReference>
<dbReference type="SMR" id="B8APK3"/>
<dbReference type="STRING" id="39946.B8APK3"/>
<dbReference type="EnsemblPlants" id="BGIOSGA013344-TA">
    <property type="protein sequence ID" value="BGIOSGA013344-PA"/>
    <property type="gene ID" value="BGIOSGA013344"/>
</dbReference>
<dbReference type="EnsemblPlants" id="OsGoSa_03g0029980.01">
    <property type="protein sequence ID" value="OsGoSa_03g0029980.01"/>
    <property type="gene ID" value="OsGoSa_03g0029980"/>
</dbReference>
<dbReference type="EnsemblPlants" id="OsIR64_03g0029630.03">
    <property type="protein sequence ID" value="OsIR64_03g0029630.03"/>
    <property type="gene ID" value="OsIR64_03g0029630"/>
</dbReference>
<dbReference type="EnsemblPlants" id="OsKYG_03g0030020.03">
    <property type="protein sequence ID" value="OsKYG_03g0030020.03"/>
    <property type="gene ID" value="OsKYG_03g0030020"/>
</dbReference>
<dbReference type="EnsemblPlants" id="OsLaMu_03g0029750.01">
    <property type="protein sequence ID" value="OsLaMu_03g0029750.01"/>
    <property type="gene ID" value="OsLaMu_03g0029750"/>
</dbReference>
<dbReference type="EnsemblPlants" id="OsLima_03g0029960.02">
    <property type="protein sequence ID" value="OsLima_03g0029960.02"/>
    <property type="gene ID" value="OsLima_03g0029960"/>
</dbReference>
<dbReference type="EnsemblPlants" id="OsLiXu_03g0029800.01">
    <property type="protein sequence ID" value="OsLiXu_03g0029800.01"/>
    <property type="gene ID" value="OsLiXu_03g0029800"/>
</dbReference>
<dbReference type="EnsemblPlants" id="OsMH63_03G030010_02">
    <property type="protein sequence ID" value="OsMH63_03G030010_02"/>
    <property type="gene ID" value="OsMH63_03G030010"/>
</dbReference>
<dbReference type="EnsemblPlants" id="OsPr106_03g0029910.02">
    <property type="protein sequence ID" value="OsPr106_03g0029910.02"/>
    <property type="gene ID" value="OsPr106_03g0029910"/>
</dbReference>
<dbReference type="EnsemblPlants" id="OsZS97_03G029880_03">
    <property type="protein sequence ID" value="OsZS97_03G029880_03"/>
    <property type="gene ID" value="OsZS97_03G029880"/>
</dbReference>
<dbReference type="Gramene" id="BGIOSGA013344-TA">
    <property type="protein sequence ID" value="BGIOSGA013344-PA"/>
    <property type="gene ID" value="BGIOSGA013344"/>
</dbReference>
<dbReference type="Gramene" id="OsGoSa_03g0029980.01">
    <property type="protein sequence ID" value="OsGoSa_03g0029980.01"/>
    <property type="gene ID" value="OsGoSa_03g0029980"/>
</dbReference>
<dbReference type="Gramene" id="OsIR64_03g0029630.03">
    <property type="protein sequence ID" value="OsIR64_03g0029630.03"/>
    <property type="gene ID" value="OsIR64_03g0029630"/>
</dbReference>
<dbReference type="Gramene" id="OsKYG_03g0030020.03">
    <property type="protein sequence ID" value="OsKYG_03g0030020.03"/>
    <property type="gene ID" value="OsKYG_03g0030020"/>
</dbReference>
<dbReference type="Gramene" id="OsLaMu_03g0029750.01">
    <property type="protein sequence ID" value="OsLaMu_03g0029750.01"/>
    <property type="gene ID" value="OsLaMu_03g0029750"/>
</dbReference>
<dbReference type="Gramene" id="OsLima_03g0029960.02">
    <property type="protein sequence ID" value="OsLima_03g0029960.02"/>
    <property type="gene ID" value="OsLima_03g0029960"/>
</dbReference>
<dbReference type="Gramene" id="OsLiXu_03g0029800.01">
    <property type="protein sequence ID" value="OsLiXu_03g0029800.01"/>
    <property type="gene ID" value="OsLiXu_03g0029800"/>
</dbReference>
<dbReference type="Gramene" id="OsMH63_03G030010_02">
    <property type="protein sequence ID" value="OsMH63_03G030010_02"/>
    <property type="gene ID" value="OsMH63_03G030010"/>
</dbReference>
<dbReference type="Gramene" id="OsPr106_03g0029910.02">
    <property type="protein sequence ID" value="OsPr106_03g0029910.02"/>
    <property type="gene ID" value="OsPr106_03g0029910"/>
</dbReference>
<dbReference type="Gramene" id="OsZS97_03G029880_03">
    <property type="protein sequence ID" value="OsZS97_03G029880_03"/>
    <property type="gene ID" value="OsZS97_03G029880"/>
</dbReference>
<dbReference type="HOGENOM" id="CLU_025144_0_0_1"/>
<dbReference type="OMA" id="TLLIHMF"/>
<dbReference type="OrthoDB" id="10251508at2759"/>
<dbReference type="Proteomes" id="UP000007015">
    <property type="component" value="Chromosome 3"/>
</dbReference>
<dbReference type="GO" id="GO:0031969">
    <property type="term" value="C:chloroplast membrane"/>
    <property type="evidence" value="ECO:0007669"/>
    <property type="project" value="UniProtKB-SubCell"/>
</dbReference>
<dbReference type="GO" id="GO:0015095">
    <property type="term" value="F:magnesium ion transmembrane transporter activity"/>
    <property type="evidence" value="ECO:0007669"/>
    <property type="project" value="EnsemblPlants"/>
</dbReference>
<dbReference type="GO" id="GO:0010960">
    <property type="term" value="P:magnesium ion homeostasis"/>
    <property type="evidence" value="ECO:0007669"/>
    <property type="project" value="EnsemblPlants"/>
</dbReference>
<dbReference type="GO" id="GO:0010117">
    <property type="term" value="P:photoprotection"/>
    <property type="evidence" value="ECO:0007669"/>
    <property type="project" value="EnsemblPlants"/>
</dbReference>
<dbReference type="GO" id="GO:0010027">
    <property type="term" value="P:thylakoid membrane organization"/>
    <property type="evidence" value="ECO:0007669"/>
    <property type="project" value="EnsemblPlants"/>
</dbReference>
<dbReference type="CDD" id="cd12823">
    <property type="entry name" value="Mrs2_Mfm1p-like"/>
    <property type="match status" value="1"/>
</dbReference>
<dbReference type="FunFam" id="1.20.58.340:FF:000013">
    <property type="entry name" value="Magnesium transporter MRS2-11, chloroplastic"/>
    <property type="match status" value="1"/>
</dbReference>
<dbReference type="FunFam" id="2.40.128.330:FF:000004">
    <property type="entry name" value="Magnesium transporter MRS2-11, chloroplastic"/>
    <property type="match status" value="1"/>
</dbReference>
<dbReference type="Gene3D" id="2.40.128.330">
    <property type="match status" value="1"/>
</dbReference>
<dbReference type="Gene3D" id="1.20.58.340">
    <property type="entry name" value="Magnesium transport protein CorA, transmembrane region"/>
    <property type="match status" value="1"/>
</dbReference>
<dbReference type="InterPro" id="IPR045863">
    <property type="entry name" value="CorA_TM1_TM2"/>
</dbReference>
<dbReference type="InterPro" id="IPR039204">
    <property type="entry name" value="MRS2-like"/>
</dbReference>
<dbReference type="PANTHER" id="PTHR13890:SF0">
    <property type="entry name" value="MAGNESIUM TRANSPORTER MRS2 HOMOLOG, MITOCHONDRIAL"/>
    <property type="match status" value="1"/>
</dbReference>
<dbReference type="PANTHER" id="PTHR13890">
    <property type="entry name" value="RNA SPLICING PROTEIN MRS2, MITOCHONDRIAL"/>
    <property type="match status" value="1"/>
</dbReference>
<dbReference type="Pfam" id="PF22099">
    <property type="entry name" value="MRS2-like"/>
    <property type="match status" value="1"/>
</dbReference>
<dbReference type="SUPFAM" id="SSF144083">
    <property type="entry name" value="Magnesium transport protein CorA, transmembrane region"/>
    <property type="match status" value="1"/>
</dbReference>
<proteinExistence type="inferred from homology"/>
<reference key="1">
    <citation type="journal article" date="2005" name="PLoS Biol.">
        <title>The genomes of Oryza sativa: a history of duplications.</title>
        <authorList>
            <person name="Yu J."/>
            <person name="Wang J."/>
            <person name="Lin W."/>
            <person name="Li S."/>
            <person name="Li H."/>
            <person name="Zhou J."/>
            <person name="Ni P."/>
            <person name="Dong W."/>
            <person name="Hu S."/>
            <person name="Zeng C."/>
            <person name="Zhang J."/>
            <person name="Zhang Y."/>
            <person name="Li R."/>
            <person name="Xu Z."/>
            <person name="Li S."/>
            <person name="Li X."/>
            <person name="Zheng H."/>
            <person name="Cong L."/>
            <person name="Lin L."/>
            <person name="Yin J."/>
            <person name="Geng J."/>
            <person name="Li G."/>
            <person name="Shi J."/>
            <person name="Liu J."/>
            <person name="Lv H."/>
            <person name="Li J."/>
            <person name="Wang J."/>
            <person name="Deng Y."/>
            <person name="Ran L."/>
            <person name="Shi X."/>
            <person name="Wang X."/>
            <person name="Wu Q."/>
            <person name="Li C."/>
            <person name="Ren X."/>
            <person name="Wang J."/>
            <person name="Wang X."/>
            <person name="Li D."/>
            <person name="Liu D."/>
            <person name="Zhang X."/>
            <person name="Ji Z."/>
            <person name="Zhao W."/>
            <person name="Sun Y."/>
            <person name="Zhang Z."/>
            <person name="Bao J."/>
            <person name="Han Y."/>
            <person name="Dong L."/>
            <person name="Ji J."/>
            <person name="Chen P."/>
            <person name="Wu S."/>
            <person name="Liu J."/>
            <person name="Xiao Y."/>
            <person name="Bu D."/>
            <person name="Tan J."/>
            <person name="Yang L."/>
            <person name="Ye C."/>
            <person name="Zhang J."/>
            <person name="Xu J."/>
            <person name="Zhou Y."/>
            <person name="Yu Y."/>
            <person name="Zhang B."/>
            <person name="Zhuang S."/>
            <person name="Wei H."/>
            <person name="Liu B."/>
            <person name="Lei M."/>
            <person name="Yu H."/>
            <person name="Li Y."/>
            <person name="Xu H."/>
            <person name="Wei S."/>
            <person name="He X."/>
            <person name="Fang L."/>
            <person name="Zhang Z."/>
            <person name="Zhang Y."/>
            <person name="Huang X."/>
            <person name="Su Z."/>
            <person name="Tong W."/>
            <person name="Li J."/>
            <person name="Tong Z."/>
            <person name="Li S."/>
            <person name="Ye J."/>
            <person name="Wang L."/>
            <person name="Fang L."/>
            <person name="Lei T."/>
            <person name="Chen C.-S."/>
            <person name="Chen H.-C."/>
            <person name="Xu Z."/>
            <person name="Li H."/>
            <person name="Huang H."/>
            <person name="Zhang F."/>
            <person name="Xu H."/>
            <person name="Li N."/>
            <person name="Zhao C."/>
            <person name="Li S."/>
            <person name="Dong L."/>
            <person name="Huang Y."/>
            <person name="Li L."/>
            <person name="Xi Y."/>
            <person name="Qi Q."/>
            <person name="Li W."/>
            <person name="Zhang B."/>
            <person name="Hu W."/>
            <person name="Zhang Y."/>
            <person name="Tian X."/>
            <person name="Jiao Y."/>
            <person name="Liang X."/>
            <person name="Jin J."/>
            <person name="Gao L."/>
            <person name="Zheng W."/>
            <person name="Hao B."/>
            <person name="Liu S.-M."/>
            <person name="Wang W."/>
            <person name="Yuan L."/>
            <person name="Cao M."/>
            <person name="McDermott J."/>
            <person name="Samudrala R."/>
            <person name="Wang J."/>
            <person name="Wong G.K.-S."/>
            <person name="Yang H."/>
        </authorList>
    </citation>
    <scope>NUCLEOTIDE SEQUENCE [LARGE SCALE GENOMIC DNA]</scope>
    <source>
        <strain>cv. 93-11</strain>
    </source>
</reference>
<organism>
    <name type="scientific">Oryza sativa subsp. indica</name>
    <name type="common">Rice</name>
    <dbReference type="NCBI Taxonomy" id="39946"/>
    <lineage>
        <taxon>Eukaryota</taxon>
        <taxon>Viridiplantae</taxon>
        <taxon>Streptophyta</taxon>
        <taxon>Embryophyta</taxon>
        <taxon>Tracheophyta</taxon>
        <taxon>Spermatophyta</taxon>
        <taxon>Magnoliopsida</taxon>
        <taxon>Liliopsida</taxon>
        <taxon>Poales</taxon>
        <taxon>Poaceae</taxon>
        <taxon>BOP clade</taxon>
        <taxon>Oryzoideae</taxon>
        <taxon>Oryzeae</taxon>
        <taxon>Oryzinae</taxon>
        <taxon>Oryza</taxon>
        <taxon>Oryza sativa</taxon>
    </lineage>
</organism>
<gene>
    <name type="primary">MRS2-A</name>
    <name type="ORF">OsI_13056</name>
</gene>
<protein>
    <recommendedName>
        <fullName>Magnesium transporter MRS2-A, chloroplastic</fullName>
    </recommendedName>
</protein>
<keyword id="KW-0150">Chloroplast</keyword>
<keyword id="KW-0406">Ion transport</keyword>
<keyword id="KW-0460">Magnesium</keyword>
<keyword id="KW-0472">Membrane</keyword>
<keyword id="KW-0934">Plastid</keyword>
<keyword id="KW-1185">Reference proteome</keyword>
<keyword id="KW-0809">Transit peptide</keyword>
<keyword id="KW-0812">Transmembrane</keyword>
<keyword id="KW-1133">Transmembrane helix</keyword>
<keyword id="KW-0813">Transport</keyword>
<comment type="function">
    <text evidence="1">Magnesium transporter that may mediate the influx of magnesium in chloroplast.</text>
</comment>
<comment type="subcellular location">
    <subcellularLocation>
        <location>Plastid</location>
    </subcellularLocation>
    <subcellularLocation>
        <location evidence="4">Plastid</location>
        <location evidence="4">Chloroplast membrane</location>
        <topology evidence="4">Multi-pass membrane protein</topology>
    </subcellularLocation>
</comment>
<comment type="similarity">
    <text evidence="4">Belongs to the CorA metal ion transporter (MIT) (TC 1.A.35.5) family.</text>
</comment>
<accession>B8APK3</accession>
<sequence>MASVSSSPSYSSQAAVLLLLHQPPHQHGHGGACLRYRGSQSQGRGNAVATSLGLSAAGRGGAGGLLLLPPLPALRAAEGKDGRAVTKDEEEEAAAAAVEEEGEVEVRREEDKPGDDGSREAAARGSGSGRFSADYISLGIREPVYEVIEVKSNGRMSTKKISRRQLLKSSGLRLRDTRSVDPSLWLMNSMPSLLVREQAILVNLGSLRAIAMHERVLIFNYNSPGGKAFLDSLLPRLNPRNINGGPAMPFQLEVVEAALLSRIQRLERRLMRIEPRVGALLEVLPNRLTADVLEQLRLSKQALVELGSRAGDLKQMLIDLLDDPHEIRRICIMGRNCTLDKLSDNMECSVPLEKQIAEEEEEEIEMLLENYLQRCESIHGQAERLLDSAREMEDSIAVNLSSRRLEVSRVELLLQVGTFCVAIGALIAGIFGMNLKSYLETNAWAFWATTGGIVVGAVAGFFIMYSYLKTRKIL</sequence>
<feature type="transit peptide" description="Chloroplast" evidence="2">
    <location>
        <begin position="1"/>
        <end position="55"/>
    </location>
</feature>
<feature type="chain" id="PRO_0000394266" description="Magnesium transporter MRS2-A, chloroplastic">
    <location>
        <begin position="56"/>
        <end position="474"/>
    </location>
</feature>
<feature type="transmembrane region" description="Helical" evidence="2">
    <location>
        <begin position="412"/>
        <end position="432"/>
    </location>
</feature>
<feature type="transmembrane region" description="Helical" evidence="2">
    <location>
        <begin position="444"/>
        <end position="464"/>
    </location>
</feature>
<feature type="region of interest" description="Disordered" evidence="3">
    <location>
        <begin position="79"/>
        <end position="129"/>
    </location>
</feature>
<feature type="short sequence motif" description="Required for magnesium transport activity">
    <location>
        <begin position="432"/>
        <end position="434"/>
    </location>
</feature>
<feature type="compositionally biased region" description="Acidic residues" evidence="3">
    <location>
        <begin position="88"/>
        <end position="103"/>
    </location>
</feature>
<feature type="compositionally biased region" description="Basic and acidic residues" evidence="3">
    <location>
        <begin position="104"/>
        <end position="122"/>
    </location>
</feature>
<evidence type="ECO:0000250" key="1"/>
<evidence type="ECO:0000255" key="2"/>
<evidence type="ECO:0000256" key="3">
    <source>
        <dbReference type="SAM" id="MobiDB-lite"/>
    </source>
</evidence>
<evidence type="ECO:0000305" key="4"/>